<reference key="1">
    <citation type="journal article" date="2000" name="Proc. Natl. Acad. Sci. U.S.A.">
        <title>Gene expression profiling in the human hypothalamus-pituitary-adrenal axis and full-length cDNA cloning.</title>
        <authorList>
            <person name="Hu R.-M."/>
            <person name="Han Z.-G."/>
            <person name="Song H.-D."/>
            <person name="Peng Y.-D."/>
            <person name="Huang Q.-H."/>
            <person name="Ren S.-X."/>
            <person name="Gu Y.-J."/>
            <person name="Huang C.-H."/>
            <person name="Li Y.-B."/>
            <person name="Jiang C.-L."/>
            <person name="Fu G."/>
            <person name="Zhang Q.-H."/>
            <person name="Gu B.-W."/>
            <person name="Dai M."/>
            <person name="Mao Y.-F."/>
            <person name="Gao G.-F."/>
            <person name="Rong R."/>
            <person name="Ye M."/>
            <person name="Zhou J."/>
            <person name="Xu S.-H."/>
            <person name="Gu J."/>
            <person name="Shi J.-X."/>
            <person name="Jin W.-R."/>
            <person name="Zhang C.-K."/>
            <person name="Wu T.-M."/>
            <person name="Huang G.-Y."/>
            <person name="Chen Z."/>
            <person name="Chen M.-D."/>
            <person name="Chen J.-L."/>
        </authorList>
    </citation>
    <scope>NUCLEOTIDE SEQUENCE [LARGE SCALE MRNA]</scope>
    <source>
        <tissue>Adrenal gland</tissue>
    </source>
</reference>
<reference key="2">
    <citation type="journal article" date="2003" name="Nature">
        <title>The DNA sequence of human chromosome 7.</title>
        <authorList>
            <person name="Hillier L.W."/>
            <person name="Fulton R.S."/>
            <person name="Fulton L.A."/>
            <person name="Graves T.A."/>
            <person name="Pepin K.H."/>
            <person name="Wagner-McPherson C."/>
            <person name="Layman D."/>
            <person name="Maas J."/>
            <person name="Jaeger S."/>
            <person name="Walker R."/>
            <person name="Wylie K."/>
            <person name="Sekhon M."/>
            <person name="Becker M.C."/>
            <person name="O'Laughlin M.D."/>
            <person name="Schaller M.E."/>
            <person name="Fewell G.A."/>
            <person name="Delehaunty K.D."/>
            <person name="Miner T.L."/>
            <person name="Nash W.E."/>
            <person name="Cordes M."/>
            <person name="Du H."/>
            <person name="Sun H."/>
            <person name="Edwards J."/>
            <person name="Bradshaw-Cordum H."/>
            <person name="Ali J."/>
            <person name="Andrews S."/>
            <person name="Isak A."/>
            <person name="Vanbrunt A."/>
            <person name="Nguyen C."/>
            <person name="Du F."/>
            <person name="Lamar B."/>
            <person name="Courtney L."/>
            <person name="Kalicki J."/>
            <person name="Ozersky P."/>
            <person name="Bielicki L."/>
            <person name="Scott K."/>
            <person name="Holmes A."/>
            <person name="Harkins R."/>
            <person name="Harris A."/>
            <person name="Strong C.M."/>
            <person name="Hou S."/>
            <person name="Tomlinson C."/>
            <person name="Dauphin-Kohlberg S."/>
            <person name="Kozlowicz-Reilly A."/>
            <person name="Leonard S."/>
            <person name="Rohlfing T."/>
            <person name="Rock S.M."/>
            <person name="Tin-Wollam A.-M."/>
            <person name="Abbott A."/>
            <person name="Minx P."/>
            <person name="Maupin R."/>
            <person name="Strowmatt C."/>
            <person name="Latreille P."/>
            <person name="Miller N."/>
            <person name="Johnson D."/>
            <person name="Murray J."/>
            <person name="Woessner J.P."/>
            <person name="Wendl M.C."/>
            <person name="Yang S.-P."/>
            <person name="Schultz B.R."/>
            <person name="Wallis J.W."/>
            <person name="Spieth J."/>
            <person name="Bieri T.A."/>
            <person name="Nelson J.O."/>
            <person name="Berkowicz N."/>
            <person name="Wohldmann P.E."/>
            <person name="Cook L.L."/>
            <person name="Hickenbotham M.T."/>
            <person name="Eldred J."/>
            <person name="Williams D."/>
            <person name="Bedell J.A."/>
            <person name="Mardis E.R."/>
            <person name="Clifton S.W."/>
            <person name="Chissoe S.L."/>
            <person name="Marra M.A."/>
            <person name="Raymond C."/>
            <person name="Haugen E."/>
            <person name="Gillett W."/>
            <person name="Zhou Y."/>
            <person name="James R."/>
            <person name="Phelps K."/>
            <person name="Iadanoto S."/>
            <person name="Bubb K."/>
            <person name="Simms E."/>
            <person name="Levy R."/>
            <person name="Clendenning J."/>
            <person name="Kaul R."/>
            <person name="Kent W.J."/>
            <person name="Furey T.S."/>
            <person name="Baertsch R.A."/>
            <person name="Brent M.R."/>
            <person name="Keibler E."/>
            <person name="Flicek P."/>
            <person name="Bork P."/>
            <person name="Suyama M."/>
            <person name="Bailey J.A."/>
            <person name="Portnoy M.E."/>
            <person name="Torrents D."/>
            <person name="Chinwalla A.T."/>
            <person name="Gish W.R."/>
            <person name="Eddy S.R."/>
            <person name="McPherson J.D."/>
            <person name="Olson M.V."/>
            <person name="Eichler E.E."/>
            <person name="Green E.D."/>
            <person name="Waterston R.H."/>
            <person name="Wilson R.K."/>
        </authorList>
    </citation>
    <scope>NUCLEOTIDE SEQUENCE [LARGE SCALE GENOMIC DNA]</scope>
</reference>
<reference key="3">
    <citation type="journal article" date="2003" name="Science">
        <title>Human chromosome 7: DNA sequence and biology.</title>
        <authorList>
            <person name="Scherer S.W."/>
            <person name="Cheung J."/>
            <person name="MacDonald J.R."/>
            <person name="Osborne L.R."/>
            <person name="Nakabayashi K."/>
            <person name="Herbrick J.-A."/>
            <person name="Carson A.R."/>
            <person name="Parker-Katiraee L."/>
            <person name="Skaug J."/>
            <person name="Khaja R."/>
            <person name="Zhang J."/>
            <person name="Hudek A.K."/>
            <person name="Li M."/>
            <person name="Haddad M."/>
            <person name="Duggan G.E."/>
            <person name="Fernandez B.A."/>
            <person name="Kanematsu E."/>
            <person name="Gentles S."/>
            <person name="Christopoulos C.C."/>
            <person name="Choufani S."/>
            <person name="Kwasnicka D."/>
            <person name="Zheng X.H."/>
            <person name="Lai Z."/>
            <person name="Nusskern D.R."/>
            <person name="Zhang Q."/>
            <person name="Gu Z."/>
            <person name="Lu F."/>
            <person name="Zeesman S."/>
            <person name="Nowaczyk M.J."/>
            <person name="Teshima I."/>
            <person name="Chitayat D."/>
            <person name="Shuman C."/>
            <person name="Weksberg R."/>
            <person name="Zackai E.H."/>
            <person name="Grebe T.A."/>
            <person name="Cox S.R."/>
            <person name="Kirkpatrick S.J."/>
            <person name="Rahman N."/>
            <person name="Friedman J.M."/>
            <person name="Heng H.H.Q."/>
            <person name="Pelicci P.G."/>
            <person name="Lo-Coco F."/>
            <person name="Belloni E."/>
            <person name="Shaffer L.G."/>
            <person name="Pober B."/>
            <person name="Morton C.C."/>
            <person name="Gusella J.F."/>
            <person name="Bruns G.A.P."/>
            <person name="Korf B.R."/>
            <person name="Quade B.J."/>
            <person name="Ligon A.H."/>
            <person name="Ferguson H."/>
            <person name="Higgins A.W."/>
            <person name="Leach N.T."/>
            <person name="Herrick S.R."/>
            <person name="Lemyre E."/>
            <person name="Farra C.G."/>
            <person name="Kim H.-G."/>
            <person name="Summers A.M."/>
            <person name="Gripp K.W."/>
            <person name="Roberts W."/>
            <person name="Szatmari P."/>
            <person name="Winsor E.J.T."/>
            <person name="Grzeschik K.-H."/>
            <person name="Teebi A."/>
            <person name="Minassian B.A."/>
            <person name="Kere J."/>
            <person name="Armengol L."/>
            <person name="Pujana M.A."/>
            <person name="Estivill X."/>
            <person name="Wilson M.D."/>
            <person name="Koop B.F."/>
            <person name="Tosi S."/>
            <person name="Moore G.E."/>
            <person name="Boright A.P."/>
            <person name="Zlotorynski E."/>
            <person name="Kerem B."/>
            <person name="Kroisel P.M."/>
            <person name="Petek E."/>
            <person name="Oscier D.G."/>
            <person name="Mould S.J."/>
            <person name="Doehner H."/>
            <person name="Doehner K."/>
            <person name="Rommens J.M."/>
            <person name="Vincent J.B."/>
            <person name="Venter J.C."/>
            <person name="Li P.W."/>
            <person name="Mural R.J."/>
            <person name="Adams M.D."/>
            <person name="Tsui L.-C."/>
        </authorList>
    </citation>
    <scope>NUCLEOTIDE SEQUENCE [LARGE SCALE GENOMIC DNA]</scope>
</reference>
<reference key="4">
    <citation type="submission" date="2005-09" db="EMBL/GenBank/DDBJ databases">
        <authorList>
            <person name="Mural R.J."/>
            <person name="Istrail S."/>
            <person name="Sutton G.G."/>
            <person name="Florea L."/>
            <person name="Halpern A.L."/>
            <person name="Mobarry C.M."/>
            <person name="Lippert R."/>
            <person name="Walenz B."/>
            <person name="Shatkay H."/>
            <person name="Dew I."/>
            <person name="Miller J.R."/>
            <person name="Flanigan M.J."/>
            <person name="Edwards N.J."/>
            <person name="Bolanos R."/>
            <person name="Fasulo D."/>
            <person name="Halldorsson B.V."/>
            <person name="Hannenhalli S."/>
            <person name="Turner R."/>
            <person name="Yooseph S."/>
            <person name="Lu F."/>
            <person name="Nusskern D.R."/>
            <person name="Shue B.C."/>
            <person name="Zheng X.H."/>
            <person name="Zhong F."/>
            <person name="Delcher A.L."/>
            <person name="Huson D.H."/>
            <person name="Kravitz S.A."/>
            <person name="Mouchard L."/>
            <person name="Reinert K."/>
            <person name="Remington K.A."/>
            <person name="Clark A.G."/>
            <person name="Waterman M.S."/>
            <person name="Eichler E.E."/>
            <person name="Adams M.D."/>
            <person name="Hunkapiller M.W."/>
            <person name="Myers E.W."/>
            <person name="Venter J.C."/>
        </authorList>
    </citation>
    <scope>NUCLEOTIDE SEQUENCE [LARGE SCALE GENOMIC DNA]</scope>
</reference>
<reference key="5">
    <citation type="journal article" date="2004" name="Genome Res.">
        <title>The status, quality, and expansion of the NIH full-length cDNA project: the Mammalian Gene Collection (MGC).</title>
        <authorList>
            <consortium name="The MGC Project Team"/>
        </authorList>
    </citation>
    <scope>NUCLEOTIDE SEQUENCE [LARGE SCALE MRNA]</scope>
    <source>
        <tissue>Placenta</tissue>
    </source>
</reference>
<reference key="6">
    <citation type="journal article" date="2004" name="Nat. Genet.">
        <title>Complete sequencing and characterization of 21,243 full-length human cDNAs.</title>
        <authorList>
            <person name="Ota T."/>
            <person name="Suzuki Y."/>
            <person name="Nishikawa T."/>
            <person name="Otsuki T."/>
            <person name="Sugiyama T."/>
            <person name="Irie R."/>
            <person name="Wakamatsu A."/>
            <person name="Hayashi K."/>
            <person name="Sato H."/>
            <person name="Nagai K."/>
            <person name="Kimura K."/>
            <person name="Makita H."/>
            <person name="Sekine M."/>
            <person name="Obayashi M."/>
            <person name="Nishi T."/>
            <person name="Shibahara T."/>
            <person name="Tanaka T."/>
            <person name="Ishii S."/>
            <person name="Yamamoto J."/>
            <person name="Saito K."/>
            <person name="Kawai Y."/>
            <person name="Isono Y."/>
            <person name="Nakamura Y."/>
            <person name="Nagahari K."/>
            <person name="Murakami K."/>
            <person name="Yasuda T."/>
            <person name="Iwayanagi T."/>
            <person name="Wagatsuma M."/>
            <person name="Shiratori A."/>
            <person name="Sudo H."/>
            <person name="Hosoiri T."/>
            <person name="Kaku Y."/>
            <person name="Kodaira H."/>
            <person name="Kondo H."/>
            <person name="Sugawara M."/>
            <person name="Takahashi M."/>
            <person name="Kanda K."/>
            <person name="Yokoi T."/>
            <person name="Furuya T."/>
            <person name="Kikkawa E."/>
            <person name="Omura Y."/>
            <person name="Abe K."/>
            <person name="Kamihara K."/>
            <person name="Katsuta N."/>
            <person name="Sato K."/>
            <person name="Tanikawa M."/>
            <person name="Yamazaki M."/>
            <person name="Ninomiya K."/>
            <person name="Ishibashi T."/>
            <person name="Yamashita H."/>
            <person name="Murakawa K."/>
            <person name="Fujimori K."/>
            <person name="Tanai H."/>
            <person name="Kimata M."/>
            <person name="Watanabe M."/>
            <person name="Hiraoka S."/>
            <person name="Chiba Y."/>
            <person name="Ishida S."/>
            <person name="Ono Y."/>
            <person name="Takiguchi S."/>
            <person name="Watanabe S."/>
            <person name="Yosida M."/>
            <person name="Hotuta T."/>
            <person name="Kusano J."/>
            <person name="Kanehori K."/>
            <person name="Takahashi-Fujii A."/>
            <person name="Hara H."/>
            <person name="Tanase T.-O."/>
            <person name="Nomura Y."/>
            <person name="Togiya S."/>
            <person name="Komai F."/>
            <person name="Hara R."/>
            <person name="Takeuchi K."/>
            <person name="Arita M."/>
            <person name="Imose N."/>
            <person name="Musashino K."/>
            <person name="Yuuki H."/>
            <person name="Oshima A."/>
            <person name="Sasaki N."/>
            <person name="Aotsuka S."/>
            <person name="Yoshikawa Y."/>
            <person name="Matsunawa H."/>
            <person name="Ichihara T."/>
            <person name="Shiohata N."/>
            <person name="Sano S."/>
            <person name="Moriya S."/>
            <person name="Momiyama H."/>
            <person name="Satoh N."/>
            <person name="Takami S."/>
            <person name="Terashima Y."/>
            <person name="Suzuki O."/>
            <person name="Nakagawa S."/>
            <person name="Senoh A."/>
            <person name="Mizoguchi H."/>
            <person name="Goto Y."/>
            <person name="Shimizu F."/>
            <person name="Wakebe H."/>
            <person name="Hishigaki H."/>
            <person name="Watanabe T."/>
            <person name="Sugiyama A."/>
            <person name="Takemoto M."/>
            <person name="Kawakami B."/>
            <person name="Yamazaki M."/>
            <person name="Watanabe K."/>
            <person name="Kumagai A."/>
            <person name="Itakura S."/>
            <person name="Fukuzumi Y."/>
            <person name="Fujimori Y."/>
            <person name="Komiyama M."/>
            <person name="Tashiro H."/>
            <person name="Tanigami A."/>
            <person name="Fujiwara T."/>
            <person name="Ono T."/>
            <person name="Yamada K."/>
            <person name="Fujii Y."/>
            <person name="Ozaki K."/>
            <person name="Hirao M."/>
            <person name="Ohmori Y."/>
            <person name="Kawabata A."/>
            <person name="Hikiji T."/>
            <person name="Kobatake N."/>
            <person name="Inagaki H."/>
            <person name="Ikema Y."/>
            <person name="Okamoto S."/>
            <person name="Okitani R."/>
            <person name="Kawakami T."/>
            <person name="Noguchi S."/>
            <person name="Itoh T."/>
            <person name="Shigeta K."/>
            <person name="Senba T."/>
            <person name="Matsumura K."/>
            <person name="Nakajima Y."/>
            <person name="Mizuno T."/>
            <person name="Morinaga M."/>
            <person name="Sasaki M."/>
            <person name="Togashi T."/>
            <person name="Oyama M."/>
            <person name="Hata H."/>
            <person name="Watanabe M."/>
            <person name="Komatsu T."/>
            <person name="Mizushima-Sugano J."/>
            <person name="Satoh T."/>
            <person name="Shirai Y."/>
            <person name="Takahashi Y."/>
            <person name="Nakagawa K."/>
            <person name="Okumura K."/>
            <person name="Nagase T."/>
            <person name="Nomura N."/>
            <person name="Kikuchi H."/>
            <person name="Masuho Y."/>
            <person name="Yamashita R."/>
            <person name="Nakai K."/>
            <person name="Yada T."/>
            <person name="Nakamura Y."/>
            <person name="Ohara O."/>
            <person name="Isogai T."/>
            <person name="Sugano S."/>
        </authorList>
    </citation>
    <scope>NUCLEOTIDE SEQUENCE [LARGE SCALE MRNA] OF 317-511</scope>
    <source>
        <tissue>Lung</tissue>
    </source>
</reference>
<reference key="7">
    <citation type="journal article" date="2006" name="Cell">
        <title>Global, in vivo, and site-specific phosphorylation dynamics in signaling networks.</title>
        <authorList>
            <person name="Olsen J.V."/>
            <person name="Blagoev B."/>
            <person name="Gnad F."/>
            <person name="Macek B."/>
            <person name="Kumar C."/>
            <person name="Mortensen P."/>
            <person name="Mann M."/>
        </authorList>
    </citation>
    <scope>PHOSPHORYLATION [LARGE SCALE ANALYSIS] AT SER-261</scope>
    <scope>IDENTIFICATION BY MASS SPECTROMETRY [LARGE SCALE ANALYSIS]</scope>
    <source>
        <tissue>Cervix carcinoma</tissue>
    </source>
</reference>
<reference key="8">
    <citation type="journal article" date="2007" name="J. Cell Sci.">
        <title>Characterisation of IRTKS, a novel IRSp53/MIM family actin regulator with distinct filament bundling properties.</title>
        <authorList>
            <person name="Millard T.H."/>
            <person name="Dawson J."/>
            <person name="Machesky L.M."/>
        </authorList>
    </citation>
    <scope>FUNCTION</scope>
    <scope>INTERACTION WITH RAC1 AND F-ACTIN</scope>
    <scope>PHOSPHORYLATION</scope>
    <scope>MUTAGENESIS OF LYS-141; LYS-142; ARG-145; LYS-146 AND 488-GLY--ARG-511</scope>
</reference>
<reference key="9">
    <citation type="journal article" date="2008" name="J. Proteome Res.">
        <title>Combining protein-based IMAC, peptide-based IMAC, and MudPIT for efficient phosphoproteomic analysis.</title>
        <authorList>
            <person name="Cantin G.T."/>
            <person name="Yi W."/>
            <person name="Lu B."/>
            <person name="Park S.K."/>
            <person name="Xu T."/>
            <person name="Lee J.-D."/>
            <person name="Yates J.R. III"/>
        </authorList>
    </citation>
    <scope>IDENTIFICATION BY MASS SPECTROMETRY [LARGE SCALE ANALYSIS]</scope>
    <source>
        <tissue>Cervix carcinoma</tissue>
    </source>
</reference>
<reference key="10">
    <citation type="journal article" date="2008" name="Proc. Natl. Acad. Sci. U.S.A.">
        <title>A quantitative atlas of mitotic phosphorylation.</title>
        <authorList>
            <person name="Dephoure N."/>
            <person name="Zhou C."/>
            <person name="Villen J."/>
            <person name="Beausoleil S.A."/>
            <person name="Bakalarski C.E."/>
            <person name="Elledge S.J."/>
            <person name="Gygi S.P."/>
        </authorList>
    </citation>
    <scope>PHOSPHORYLATION [LARGE SCALE ANALYSIS] AT THR-248; THR-257; SER-261; SER-281; SER-331 AND THR-412</scope>
    <scope>IDENTIFICATION BY MASS SPECTROMETRY [LARGE SCALE ANALYSIS]</scope>
    <source>
        <tissue>Cervix carcinoma</tissue>
    </source>
</reference>
<reference key="11">
    <citation type="journal article" date="2009" name="Anal. Chem.">
        <title>Lys-N and trypsin cover complementary parts of the phosphoproteome in a refined SCX-based approach.</title>
        <authorList>
            <person name="Gauci S."/>
            <person name="Helbig A.O."/>
            <person name="Slijper M."/>
            <person name="Krijgsveld J."/>
            <person name="Heck A.J."/>
            <person name="Mohammed S."/>
        </authorList>
    </citation>
    <scope>IDENTIFICATION BY MASS SPECTROMETRY [LARGE SCALE ANALYSIS]</scope>
</reference>
<reference key="12">
    <citation type="journal article" date="2009" name="BMC Immunol.">
        <title>Identification of SH3 domain interaction partners of human FasL (CD178) by phage display screening.</title>
        <authorList>
            <person name="Voss M."/>
            <person name="Lettau M."/>
            <person name="Janssen O."/>
        </authorList>
    </citation>
    <scope>INTERACTION WITH FASLG</scope>
</reference>
<reference key="13">
    <citation type="journal article" date="2009" name="Proc. Natl. Acad. Sci. U.S.A.">
        <title>Insulin receptor tyrosine kinase substrate links the E. coli O157:H7 actin assembly effectors Tir and EspF(U) during pedestal formation.</title>
        <authorList>
            <person name="Vingadassalom D."/>
            <person name="Kazlauskas A."/>
            <person name="Skehan B."/>
            <person name="Cheng H.C."/>
            <person name="Magoun L."/>
            <person name="Robbins D."/>
            <person name="Rosen M.K."/>
            <person name="Saksela K."/>
            <person name="Leong J.M."/>
        </authorList>
    </citation>
    <scope>FUNCTION</scope>
    <scope>INTERACTION WITH E.COLI EFFECTOR PROTEIN ESPF(U)</scope>
    <scope>IDENTIFICATION IN A COMPLEX WITH WASL AND E.COLI EFFECTOR PROTEIN ESPF(U)</scope>
    <scope>INTERACTION WITH E.COLI INTIMIN RECEPTOR TIR</scope>
    <scope>SUBCELLULAR LOCATION</scope>
</reference>
<reference key="14">
    <citation type="journal article" date="2010" name="Sci. Signal.">
        <title>Quantitative phosphoproteomics reveals widespread full phosphorylation site occupancy during mitosis.</title>
        <authorList>
            <person name="Olsen J.V."/>
            <person name="Vermeulen M."/>
            <person name="Santamaria A."/>
            <person name="Kumar C."/>
            <person name="Miller M.L."/>
            <person name="Jensen L.J."/>
            <person name="Gnad F."/>
            <person name="Cox J."/>
            <person name="Jensen T.S."/>
            <person name="Nigg E.A."/>
            <person name="Brunak S."/>
            <person name="Mann M."/>
        </authorList>
    </citation>
    <scope>PHOSPHORYLATION [LARGE SCALE ANALYSIS] AT THR-248; THR-257; SER-261 AND THR-412</scope>
    <scope>IDENTIFICATION BY MASS SPECTROMETRY [LARGE SCALE ANALYSIS]</scope>
    <source>
        <tissue>Cervix carcinoma</tissue>
    </source>
</reference>
<reference key="15">
    <citation type="journal article" date="2011" name="BMC Syst. Biol.">
        <title>Initial characterization of the human central proteome.</title>
        <authorList>
            <person name="Burkard T.R."/>
            <person name="Planyavsky M."/>
            <person name="Kaupe I."/>
            <person name="Breitwieser F.P."/>
            <person name="Buerckstuemmer T."/>
            <person name="Bennett K.L."/>
            <person name="Superti-Furga G."/>
            <person name="Colinge J."/>
        </authorList>
    </citation>
    <scope>IDENTIFICATION BY MASS SPECTROMETRY [LARGE SCALE ANALYSIS]</scope>
</reference>
<reference key="16">
    <citation type="journal article" date="2013" name="J. Proteome Res.">
        <title>Toward a comprehensive characterization of a human cancer cell phosphoproteome.</title>
        <authorList>
            <person name="Zhou H."/>
            <person name="Di Palma S."/>
            <person name="Preisinger C."/>
            <person name="Peng M."/>
            <person name="Polat A.N."/>
            <person name="Heck A.J."/>
            <person name="Mohammed S."/>
        </authorList>
    </citation>
    <scope>PHOSPHORYLATION [LARGE SCALE ANALYSIS] AT THR-257; SER-261; SER-281; SER-331 AND SER-354</scope>
    <scope>IDENTIFICATION BY MASS SPECTROMETRY [LARGE SCALE ANALYSIS]</scope>
    <source>
        <tissue>Cervix carcinoma</tissue>
        <tissue>Erythroleukemia</tissue>
    </source>
</reference>
<reference key="17">
    <citation type="journal article" date="2014" name="J. Proteomics">
        <title>An enzyme assisted RP-RPLC approach for in-depth analysis of human liver phosphoproteome.</title>
        <authorList>
            <person name="Bian Y."/>
            <person name="Song C."/>
            <person name="Cheng K."/>
            <person name="Dong M."/>
            <person name="Wang F."/>
            <person name="Huang J."/>
            <person name="Sun D."/>
            <person name="Wang L."/>
            <person name="Ye M."/>
            <person name="Zou H."/>
        </authorList>
    </citation>
    <scope>PHOSPHORYLATION [LARGE SCALE ANALYSIS] AT SER-331; SER-414 AND SER-420</scope>
    <scope>IDENTIFICATION BY MASS SPECTROMETRY [LARGE SCALE ANALYSIS]</scope>
    <source>
        <tissue>Liver</tissue>
    </source>
</reference>
<reference key="18">
    <citation type="journal article" date="2010" name="Proc. Natl. Acad. Sci. U.S.A.">
        <title>Recognition of tandem PxxP motifs as a unique Src homology 3-binding mode triggers pathogen-driven actin assembly.</title>
        <authorList>
            <person name="Aitio O."/>
            <person name="Hellman M."/>
            <person name="Kazlauskas A."/>
            <person name="Vingadassalom D.F."/>
            <person name="Leong J.M."/>
            <person name="Saksela K."/>
            <person name="Permi P."/>
        </authorList>
    </citation>
    <scope>STRUCTURE BY NMR OF 339-402 IN COMPLEX WITH E.COLI EFFECTOR PROTEIN ESPF(U)</scope>
    <scope>SUBUNIT</scope>
</reference>
<reference key="19">
    <citation type="journal article" date="2012" name="Structure">
        <title>Enterohaemorrhagic Escherichia coli exploits a tryptophan switch to hijack host f-actin assembly.</title>
        <authorList>
            <person name="Aitio O."/>
            <person name="Hellman M."/>
            <person name="Skehan B."/>
            <person name="Kesti T."/>
            <person name="Leong J.M."/>
            <person name="Saksela K."/>
            <person name="Permi P."/>
        </authorList>
    </citation>
    <scope>STRUCTURE BY NMR OF 339-402 IN COMPLEX WITH WASL AND E.COLI ESPF(U)</scope>
    <scope>FUNCTION</scope>
    <scope>IDENTIFICATION IN A COMPLEX WITH WASL AND E.COLI ESPF(U)</scope>
</reference>
<keyword id="KW-0002">3D-structure</keyword>
<keyword id="KW-0009">Actin-binding</keyword>
<keyword id="KW-0175">Coiled coil</keyword>
<keyword id="KW-0963">Cytoplasm</keyword>
<keyword id="KW-0206">Cytoskeleton</keyword>
<keyword id="KW-0597">Phosphoprotein</keyword>
<keyword id="KW-1267">Proteomics identification</keyword>
<keyword id="KW-1185">Reference proteome</keyword>
<keyword id="KW-0728">SH3 domain</keyword>
<gene>
    <name type="primary">BAIAP2L1</name>
    <name type="synonym">IRTKS</name>
</gene>
<name>BI2L1_HUMAN</name>
<feature type="chain" id="PRO_0000247854" description="BAR/IMD domain-containing adapter protein 2-like 1">
    <location>
        <begin position="1"/>
        <end position="511"/>
    </location>
</feature>
<feature type="domain" description="IMD" evidence="5">
    <location>
        <begin position="1"/>
        <end position="249"/>
    </location>
</feature>
<feature type="domain" description="SH3" evidence="4">
    <location>
        <begin position="339"/>
        <end position="402"/>
    </location>
</feature>
<feature type="region of interest" description="Disordered" evidence="6">
    <location>
        <begin position="302"/>
        <end position="328"/>
    </location>
</feature>
<feature type="region of interest" description="Disordered" evidence="6">
    <location>
        <begin position="451"/>
        <end position="511"/>
    </location>
</feature>
<feature type="region of interest" description="Binds F-actin">
    <location>
        <begin position="483"/>
        <end position="511"/>
    </location>
</feature>
<feature type="coiled-coil region" evidence="3">
    <location>
        <begin position="115"/>
        <end position="154"/>
    </location>
</feature>
<feature type="compositionally biased region" description="Polar residues" evidence="6">
    <location>
        <begin position="303"/>
        <end position="328"/>
    </location>
</feature>
<feature type="modified residue" description="Phosphothreonine" evidence="15 16">
    <location>
        <position position="248"/>
    </location>
</feature>
<feature type="modified residue" description="Phosphothreonine" evidence="15 16 17">
    <location>
        <position position="257"/>
    </location>
</feature>
<feature type="modified residue" description="Phosphoserine" evidence="14 15 16 17">
    <location>
        <position position="261"/>
    </location>
</feature>
<feature type="modified residue" description="Phosphoserine" evidence="15 17">
    <location>
        <position position="281"/>
    </location>
</feature>
<feature type="modified residue" description="Phosphoserine" evidence="15 17 18">
    <location>
        <position position="331"/>
    </location>
</feature>
<feature type="modified residue" description="Phosphoserine" evidence="17">
    <location>
        <position position="354"/>
    </location>
</feature>
<feature type="modified residue" description="Phosphothreonine" evidence="15 16">
    <location>
        <position position="412"/>
    </location>
</feature>
<feature type="modified residue" description="Phosphoserine" evidence="18">
    <location>
        <position position="414"/>
    </location>
</feature>
<feature type="modified residue" description="Phosphoserine" evidence="18">
    <location>
        <position position="420"/>
    </location>
</feature>
<feature type="modified residue" description="Phosphoserine" evidence="2">
    <location>
        <position position="422"/>
    </location>
</feature>
<feature type="sequence variant" id="VAR_033515" description="In dbSNP:rs2269966.">
    <original>S</original>
    <variation>T</variation>
    <location>
        <position position="460"/>
    </location>
</feature>
<feature type="mutagenesis site" description="Loss ability to induce the formation of actin clusters; when associated with K-142; R-145 and K-146." evidence="7">
    <original>K</original>
    <variation>E</variation>
    <location>
        <position position="141"/>
    </location>
</feature>
<feature type="mutagenesis site" description="Loss ability to induce the formation of actin clusters; when associated with K-141; R-145 and K-146." evidence="7">
    <original>K</original>
    <variation>E</variation>
    <location>
        <position position="142"/>
    </location>
</feature>
<feature type="mutagenesis site" description="Loss ability to induce the formation of actin clusters; when associated with K-141; K-142 and K-146." evidence="7">
    <original>R</original>
    <variation>E</variation>
    <location>
        <position position="145"/>
    </location>
</feature>
<feature type="mutagenesis site" description="Loss ability to induce the formation of actin clusters; when associated with K-141; K-142 and R-145." evidence="7">
    <original>K</original>
    <variation>E</variation>
    <location>
        <position position="146"/>
    </location>
</feature>
<feature type="mutagenesis site" description="Loss ability to induce the formation of actin clusters; induce the formation of long filopodia." evidence="7">
    <location>
        <begin position="488"/>
        <end position="511"/>
    </location>
</feature>
<feature type="sequence conflict" description="In Ref. 6; BAB15671." evidence="12" ref="6">
    <original>A</original>
    <variation>V</variation>
    <location>
        <position position="456"/>
    </location>
</feature>
<feature type="sequence conflict" description="In Ref. 6; BAB15671." evidence="12" ref="6">
    <original>S</original>
    <variation>F</variation>
    <location>
        <position position="460"/>
    </location>
</feature>
<feature type="sequence conflict" description="In Ref. 6; BAB15671." evidence="12" ref="6">
    <original>A</original>
    <variation>V</variation>
    <location>
        <position position="464"/>
    </location>
</feature>
<feature type="sequence conflict" description="In Ref. 6; BAB15671." evidence="12" ref="6">
    <original>A</original>
    <variation>V</variation>
    <location>
        <position position="466"/>
    </location>
</feature>
<feature type="sequence conflict" description="In Ref. 6; BAB15671." evidence="12" ref="6">
    <original>S</original>
    <variation>F</variation>
    <location>
        <position position="467"/>
    </location>
</feature>
<feature type="strand" evidence="19">
    <location>
        <begin position="343"/>
        <end position="348"/>
    </location>
</feature>
<feature type="strand" evidence="19">
    <location>
        <begin position="356"/>
        <end position="358"/>
    </location>
</feature>
<feature type="strand" evidence="19">
    <location>
        <begin position="366"/>
        <end position="373"/>
    </location>
</feature>
<feature type="strand" evidence="19">
    <location>
        <begin position="378"/>
        <end position="386"/>
    </location>
</feature>
<feature type="strand" evidence="19">
    <location>
        <begin position="389"/>
        <end position="393"/>
    </location>
</feature>
<feature type="helix" evidence="19">
    <location>
        <begin position="394"/>
        <end position="396"/>
    </location>
</feature>
<feature type="strand" evidence="19">
    <location>
        <begin position="397"/>
        <end position="400"/>
    </location>
</feature>
<accession>Q9UHR4</accession>
<accession>A4D268</accession>
<accession>Q75L21</accession>
<accession>Q75L22</accession>
<accession>Q96CV4</accession>
<accession>Q9H5F5</accession>
<accession>Q9Y2M8</accession>
<sequence length="511" mass="56883">MSRGPEEVNRLTESTYRNVMEQFNPGLRNLINLGKNYEKAVNAMILAGKAYYDGVAKIGEIATGSPVSTELGHVLIEISSTHKKLNESLDENFKKFHKEIIHELEKKIELDVKYMNATLKRYQTEHKNKLESLEKSQAELKKIRRKSQGSRNALKYEHKEIEYVETVTSRQSEIQKFIADGCKEALLEEKRRFCFLVDKHCGFANHIHYYHLQSAELLNSKLPRWQETCVDAIKVPEKIMNMIEEIKTPASTPVSGTPQASPMIERSNVVRKDYDTLSKCSPKMPPAPSGRAYTSPLIDMFNNPATAAPNSQRVNNSTGTSEDPSLQRSVSVATGLNMMKKQKVKTIFPHTAGSNKTLLSFAQGDVITLLIPEEKDGWLYGEHDVSKARGWFPSSYTKLLEENETEAVTVPTPSPTPVRSISTVNLSENSSVVIPPPDYLECLSMGAAADRRADSARTTSTFKAPASKPETAAPNDANGTAKPPFLSGENPFATVKLRPTVTNDRSAPIIR</sequence>
<protein>
    <recommendedName>
        <fullName evidence="13">BAR/IMD domain-containing adapter protein 2-like 1</fullName>
    </recommendedName>
    <alternativeName>
        <fullName>Brain-specific angiogenesis inhibitor 1-associated protein 2-like protein 1</fullName>
        <shortName>BAI1-associated protein 2-like protein 1</shortName>
    </alternativeName>
    <alternativeName>
        <fullName>Insulin receptor tyrosine kinase substrate</fullName>
    </alternativeName>
</protein>
<proteinExistence type="evidence at protein level"/>
<organism>
    <name type="scientific">Homo sapiens</name>
    <name type="common">Human</name>
    <dbReference type="NCBI Taxonomy" id="9606"/>
    <lineage>
        <taxon>Eukaryota</taxon>
        <taxon>Metazoa</taxon>
        <taxon>Chordata</taxon>
        <taxon>Craniata</taxon>
        <taxon>Vertebrata</taxon>
        <taxon>Euteleostomi</taxon>
        <taxon>Mammalia</taxon>
        <taxon>Eutheria</taxon>
        <taxon>Euarchontoglires</taxon>
        <taxon>Primates</taxon>
        <taxon>Haplorrhini</taxon>
        <taxon>Catarrhini</taxon>
        <taxon>Hominidae</taxon>
        <taxon>Homo</taxon>
    </lineage>
</organism>
<comment type="function">
    <text evidence="7 8 11">May function as adapter protein. Involved in the formation of clusters of actin bundles. Plays a role in the reorganization of the actin cytoskeleton in response to bacterial infection.</text>
</comment>
<comment type="subunit">
    <text evidence="7 8 9 10 11">Interacts with RAC1. Binds to F-actin. Interacts with FASLG. Interacts (via SH3 domain) with E.coli effector protein EspF(U) (via PXXP motifs). Identified in a complex containing at least WASL, BAIAP2L1 and E.coli EspF(U). Interacts with E.coli intimin receptor Tir.</text>
</comment>
<comment type="interaction">
    <interactant intactId="EBI-2483278">
        <id>Q9UHR4</id>
    </interactant>
    <interactant intactId="EBI-747185">
        <id>O95817</id>
        <label>BAG3</label>
    </interactant>
    <organismsDiffer>false</organismsDiffer>
    <experiments>3</experiments>
</comment>
<comment type="interaction">
    <interactant intactId="EBI-2483278">
        <id>Q9UHR4</id>
    </interactant>
    <interactant intactId="EBI-525456">
        <id>Q9UQB8</id>
        <label>BAIAP2</label>
    </interactant>
    <organismsDiffer>false</organismsDiffer>
    <experiments>5</experiments>
</comment>
<comment type="interaction">
    <interactant intactId="EBI-2483278">
        <id>Q9UHR4</id>
    </interactant>
    <interactant intactId="EBI-9092016">
        <id>Q9UQB8-6</id>
        <label>BAIAP2</label>
    </interactant>
    <organismsDiffer>false</organismsDiffer>
    <experiments>3</experiments>
</comment>
<comment type="interaction">
    <interactant intactId="EBI-2483278">
        <id>Q9UHR4</id>
    </interactant>
    <interactant intactId="EBI-3867333">
        <id>A8MQ03</id>
        <label>CYSRT1</label>
    </interactant>
    <organismsDiffer>false</organismsDiffer>
    <experiments>3</experiments>
</comment>
<comment type="interaction">
    <interactant intactId="EBI-2483278">
        <id>Q9UHR4</id>
    </interactant>
    <interactant intactId="EBI-375576">
        <id>Q12929</id>
        <label>EPS8</label>
    </interactant>
    <organismsDiffer>false</organismsDiffer>
    <experiments>4</experiments>
</comment>
<comment type="interaction">
    <interactant intactId="EBI-2483278">
        <id>Q9UHR4</id>
    </interactant>
    <interactant intactId="EBI-3046631">
        <id>O43813</id>
        <label>LANCL1</label>
    </interactant>
    <organismsDiffer>false</organismsDiffer>
    <experiments>3</experiments>
</comment>
<comment type="interaction">
    <interactant intactId="EBI-2483278">
        <id>Q9UHR4</id>
    </interactant>
    <interactant intactId="EBI-10039462">
        <id>P0DJ88</id>
        <label>espF(U)</label>
    </interactant>
    <organismsDiffer>true</organismsDiffer>
    <experiments>9</experiments>
</comment>
<comment type="interaction">
    <interactant intactId="EBI-2483278">
        <id>Q9UHR4</id>
    </interactant>
    <interactant intactId="EBI-6480811">
        <id>Q7DB77</id>
        <label>tir</label>
    </interactant>
    <organismsDiffer>true</organismsDiffer>
    <experiments>3</experiments>
</comment>
<comment type="subcellular location">
    <subcellularLocation>
        <location evidence="8">Cytoplasm</location>
        <location evidence="8">Cytoskeleton</location>
    </subcellularLocation>
    <text>Recruited to actin pedestals that are formed upon infection by bacteria at bacterial attachment sites.</text>
</comment>
<comment type="domain">
    <text evidence="1">The IMD domain is predicted to have a helical structure. It may induce actin bundling and filopodia formation (By similarity).</text>
</comment>
<comment type="PTM">
    <text evidence="7">Phosphorylated on tyrosine in response to insulin.</text>
</comment>
<comment type="sequence caution" evidence="12">
    <conflict type="erroneous gene model prediction">
        <sequence resource="EMBL-CDS" id="AAD20937"/>
    </conflict>
</comment>
<comment type="sequence caution" evidence="12">
    <conflict type="erroneous initiation">
        <sequence resource="EMBL-CDS" id="AAS07549"/>
    </conflict>
</comment>
<comment type="sequence caution" evidence="12">
    <conflict type="erroneous initiation">
        <sequence resource="EMBL-CDS" id="BAB15671"/>
    </conflict>
</comment>
<evidence type="ECO:0000250" key="1"/>
<evidence type="ECO:0000250" key="2">
    <source>
        <dbReference type="UniProtKB" id="Q9DBJ3"/>
    </source>
</evidence>
<evidence type="ECO:0000255" key="3"/>
<evidence type="ECO:0000255" key="4">
    <source>
        <dbReference type="PROSITE-ProRule" id="PRU00192"/>
    </source>
</evidence>
<evidence type="ECO:0000255" key="5">
    <source>
        <dbReference type="PROSITE-ProRule" id="PRU00668"/>
    </source>
</evidence>
<evidence type="ECO:0000256" key="6">
    <source>
        <dbReference type="SAM" id="MobiDB-lite"/>
    </source>
</evidence>
<evidence type="ECO:0000269" key="7">
    <source>
    </source>
</evidence>
<evidence type="ECO:0000269" key="8">
    <source>
    </source>
</evidence>
<evidence type="ECO:0000269" key="9">
    <source>
    </source>
</evidence>
<evidence type="ECO:0000269" key="10">
    <source>
    </source>
</evidence>
<evidence type="ECO:0000269" key="11">
    <source>
    </source>
</evidence>
<evidence type="ECO:0000305" key="12"/>
<evidence type="ECO:0000312" key="13">
    <source>
        <dbReference type="HGNC" id="HGNC:21649"/>
    </source>
</evidence>
<evidence type="ECO:0007744" key="14">
    <source>
    </source>
</evidence>
<evidence type="ECO:0007744" key="15">
    <source>
    </source>
</evidence>
<evidence type="ECO:0007744" key="16">
    <source>
    </source>
</evidence>
<evidence type="ECO:0007744" key="17">
    <source>
    </source>
</evidence>
<evidence type="ECO:0007744" key="18">
    <source>
    </source>
</evidence>
<evidence type="ECO:0007829" key="19">
    <source>
        <dbReference type="PDB" id="2KXC"/>
    </source>
</evidence>
<dbReference type="EMBL" id="AF119666">
    <property type="protein sequence ID" value="AAF17223.2"/>
    <property type="molecule type" value="mRNA"/>
</dbReference>
<dbReference type="EMBL" id="AC004841">
    <property type="protein sequence ID" value="AAD20937.1"/>
    <property type="status" value="ALT_SEQ"/>
    <property type="molecule type" value="Genomic_DNA"/>
</dbReference>
<dbReference type="EMBL" id="AC093169">
    <property type="status" value="NOT_ANNOTATED_CDS"/>
    <property type="molecule type" value="Genomic_DNA"/>
</dbReference>
<dbReference type="EMBL" id="AC093799">
    <property type="protein sequence ID" value="AAS07549.1"/>
    <property type="status" value="ALT_INIT"/>
    <property type="molecule type" value="Genomic_DNA"/>
</dbReference>
<dbReference type="EMBL" id="AC093799">
    <property type="protein sequence ID" value="AAS07550.1"/>
    <property type="molecule type" value="Genomic_DNA"/>
</dbReference>
<dbReference type="EMBL" id="CH236956">
    <property type="protein sequence ID" value="EAL23890.1"/>
    <property type="molecule type" value="Genomic_DNA"/>
</dbReference>
<dbReference type="EMBL" id="CH471091">
    <property type="protein sequence ID" value="EAW76706.1"/>
    <property type="molecule type" value="Genomic_DNA"/>
</dbReference>
<dbReference type="EMBL" id="BC013888">
    <property type="protein sequence ID" value="AAH13888.1"/>
    <property type="molecule type" value="mRNA"/>
</dbReference>
<dbReference type="EMBL" id="AK027142">
    <property type="protein sequence ID" value="BAB15671.1"/>
    <property type="status" value="ALT_INIT"/>
    <property type="molecule type" value="mRNA"/>
</dbReference>
<dbReference type="CCDS" id="CCDS34687.1"/>
<dbReference type="RefSeq" id="NP_061330.2">
    <property type="nucleotide sequence ID" value="NM_018842.4"/>
</dbReference>
<dbReference type="PDB" id="2KXC">
    <property type="method" value="NMR"/>
    <property type="chains" value="A=339-402"/>
</dbReference>
<dbReference type="PDB" id="2LNH">
    <property type="method" value="NMR"/>
    <property type="chains" value="B=339-402"/>
</dbReference>
<dbReference type="PDBsum" id="2KXC"/>
<dbReference type="PDBsum" id="2LNH"/>
<dbReference type="BMRB" id="Q9UHR4"/>
<dbReference type="SMR" id="Q9UHR4"/>
<dbReference type="BioGRID" id="121017">
    <property type="interactions" value="143"/>
</dbReference>
<dbReference type="DIP" id="DIP-53820N"/>
<dbReference type="FunCoup" id="Q9UHR4">
    <property type="interactions" value="868"/>
</dbReference>
<dbReference type="IntAct" id="Q9UHR4">
    <property type="interactions" value="83"/>
</dbReference>
<dbReference type="MINT" id="Q9UHR4"/>
<dbReference type="STRING" id="9606.ENSP00000005260"/>
<dbReference type="GlyGen" id="Q9UHR4">
    <property type="glycosylation" value="5 sites, 2 N-linked glycans (2 sites), 1 O-linked glycan (1 site)"/>
</dbReference>
<dbReference type="iPTMnet" id="Q9UHR4"/>
<dbReference type="MetOSite" id="Q9UHR4"/>
<dbReference type="PhosphoSitePlus" id="Q9UHR4"/>
<dbReference type="SwissPalm" id="Q9UHR4"/>
<dbReference type="BioMuta" id="BAIAP2L1"/>
<dbReference type="DMDM" id="74735022"/>
<dbReference type="jPOST" id="Q9UHR4"/>
<dbReference type="MassIVE" id="Q9UHR4"/>
<dbReference type="PaxDb" id="9606-ENSP00000005260"/>
<dbReference type="PeptideAtlas" id="Q9UHR4"/>
<dbReference type="ProteomicsDB" id="84402"/>
<dbReference type="Pumba" id="Q9UHR4"/>
<dbReference type="Antibodypedia" id="16001">
    <property type="antibodies" value="207 antibodies from 31 providers"/>
</dbReference>
<dbReference type="DNASU" id="55971"/>
<dbReference type="Ensembl" id="ENST00000005260.9">
    <property type="protein sequence ID" value="ENSP00000005260.8"/>
    <property type="gene ID" value="ENSG00000006453.14"/>
</dbReference>
<dbReference type="GeneID" id="55971"/>
<dbReference type="KEGG" id="hsa:55971"/>
<dbReference type="MANE-Select" id="ENST00000005260.9">
    <property type="protein sequence ID" value="ENSP00000005260.8"/>
    <property type="RefSeq nucleotide sequence ID" value="NM_018842.5"/>
    <property type="RefSeq protein sequence ID" value="NP_061330.2"/>
</dbReference>
<dbReference type="UCSC" id="uc003upj.4">
    <property type="organism name" value="human"/>
</dbReference>
<dbReference type="AGR" id="HGNC:21649"/>
<dbReference type="CTD" id="55971"/>
<dbReference type="DisGeNET" id="55971"/>
<dbReference type="GeneCards" id="BAIAP2L1"/>
<dbReference type="HGNC" id="HGNC:21649">
    <property type="gene designation" value="BAIAP2L1"/>
</dbReference>
<dbReference type="HPA" id="ENSG00000006453">
    <property type="expression patterns" value="Tissue enhanced (stomach)"/>
</dbReference>
<dbReference type="MIM" id="611877">
    <property type="type" value="gene"/>
</dbReference>
<dbReference type="neXtProt" id="NX_Q9UHR4"/>
<dbReference type="OpenTargets" id="ENSG00000006453"/>
<dbReference type="PharmGKB" id="PA142672562"/>
<dbReference type="VEuPathDB" id="HostDB:ENSG00000006453"/>
<dbReference type="eggNOG" id="ENOG502QQC6">
    <property type="taxonomic scope" value="Eukaryota"/>
</dbReference>
<dbReference type="GeneTree" id="ENSGT00940000153560"/>
<dbReference type="HOGENOM" id="CLU_025877_0_1_1"/>
<dbReference type="InParanoid" id="Q9UHR4"/>
<dbReference type="OMA" id="YQAEHRS"/>
<dbReference type="OrthoDB" id="3800937at2759"/>
<dbReference type="PAN-GO" id="Q9UHR4">
    <property type="GO annotations" value="6 GO annotations based on evolutionary models"/>
</dbReference>
<dbReference type="PhylomeDB" id="Q9UHR4"/>
<dbReference type="TreeFam" id="TF325648"/>
<dbReference type="PathwayCommons" id="Q9UHR4"/>
<dbReference type="Reactome" id="R-HSA-9013149">
    <property type="pathway name" value="RAC1 GTPase cycle"/>
</dbReference>
<dbReference type="Reactome" id="R-HSA-9013404">
    <property type="pathway name" value="RAC2 GTPase cycle"/>
</dbReference>
<dbReference type="Reactome" id="R-HSA-9013423">
    <property type="pathway name" value="RAC3 GTPase cycle"/>
</dbReference>
<dbReference type="Reactome" id="R-HSA-9035034">
    <property type="pathway name" value="RHOF GTPase cycle"/>
</dbReference>
<dbReference type="SignaLink" id="Q9UHR4"/>
<dbReference type="SIGNOR" id="Q9UHR4"/>
<dbReference type="BioGRID-ORCS" id="55971">
    <property type="hits" value="20 hits in 1164 CRISPR screens"/>
</dbReference>
<dbReference type="ChiTaRS" id="BAIAP2L1">
    <property type="organism name" value="human"/>
</dbReference>
<dbReference type="EvolutionaryTrace" id="Q9UHR4"/>
<dbReference type="GeneWiki" id="BAIAP2L1"/>
<dbReference type="GenomeRNAi" id="55971"/>
<dbReference type="Pharos" id="Q9UHR4">
    <property type="development level" value="Tbio"/>
</dbReference>
<dbReference type="PRO" id="PR:Q9UHR4"/>
<dbReference type="Proteomes" id="UP000005640">
    <property type="component" value="Chromosome 7"/>
</dbReference>
<dbReference type="RNAct" id="Q9UHR4">
    <property type="molecule type" value="protein"/>
</dbReference>
<dbReference type="Bgee" id="ENSG00000006453">
    <property type="expression patterns" value="Expressed in pancreatic ductal cell and 182 other cell types or tissues"/>
</dbReference>
<dbReference type="GO" id="GO:0005912">
    <property type="term" value="C:adherens junction"/>
    <property type="evidence" value="ECO:0007005"/>
    <property type="project" value="BHF-UCL"/>
</dbReference>
<dbReference type="GO" id="GO:0005856">
    <property type="term" value="C:cytoskeleton"/>
    <property type="evidence" value="ECO:0007669"/>
    <property type="project" value="UniProtKB-SubCell"/>
</dbReference>
<dbReference type="GO" id="GO:0005829">
    <property type="term" value="C:cytosol"/>
    <property type="evidence" value="ECO:0000314"/>
    <property type="project" value="UniProtKB"/>
</dbReference>
<dbReference type="GO" id="GO:0070062">
    <property type="term" value="C:extracellular exosome"/>
    <property type="evidence" value="ECO:0007005"/>
    <property type="project" value="UniProtKB"/>
</dbReference>
<dbReference type="GO" id="GO:0005654">
    <property type="term" value="C:nucleoplasm"/>
    <property type="evidence" value="ECO:0000314"/>
    <property type="project" value="HPA"/>
</dbReference>
<dbReference type="GO" id="GO:0005886">
    <property type="term" value="C:plasma membrane"/>
    <property type="evidence" value="ECO:0000314"/>
    <property type="project" value="HPA"/>
</dbReference>
<dbReference type="GO" id="GO:0003779">
    <property type="term" value="F:actin binding"/>
    <property type="evidence" value="ECO:0007669"/>
    <property type="project" value="UniProtKB-KW"/>
</dbReference>
<dbReference type="GO" id="GO:0098641">
    <property type="term" value="F:cadherin binding involved in cell-cell adhesion"/>
    <property type="evidence" value="ECO:0007005"/>
    <property type="project" value="BHF-UCL"/>
</dbReference>
<dbReference type="GO" id="GO:0070064">
    <property type="term" value="F:proline-rich region binding"/>
    <property type="evidence" value="ECO:0000314"/>
    <property type="project" value="UniProtKB"/>
</dbReference>
<dbReference type="GO" id="GO:0051764">
    <property type="term" value="P:actin crosslink formation"/>
    <property type="evidence" value="ECO:0000318"/>
    <property type="project" value="GO_Central"/>
</dbReference>
<dbReference type="GO" id="GO:0051017">
    <property type="term" value="P:actin filament bundle assembly"/>
    <property type="evidence" value="ECO:0000318"/>
    <property type="project" value="GO_Central"/>
</dbReference>
<dbReference type="GO" id="GO:0007009">
    <property type="term" value="P:plasma membrane organization"/>
    <property type="evidence" value="ECO:0007669"/>
    <property type="project" value="InterPro"/>
</dbReference>
<dbReference type="GO" id="GO:0030838">
    <property type="term" value="P:positive regulation of actin filament polymerization"/>
    <property type="evidence" value="ECO:0000314"/>
    <property type="project" value="UniProtKB"/>
</dbReference>
<dbReference type="GO" id="GO:0032956">
    <property type="term" value="P:regulation of actin cytoskeleton organization"/>
    <property type="evidence" value="ECO:0000315"/>
    <property type="project" value="UniProtKB"/>
</dbReference>
<dbReference type="CDD" id="cd07645">
    <property type="entry name" value="I-BAR_IMD_BAIAP2L1"/>
    <property type="match status" value="1"/>
</dbReference>
<dbReference type="CDD" id="cd11913">
    <property type="entry name" value="SH3_BAIAP2L1"/>
    <property type="match status" value="1"/>
</dbReference>
<dbReference type="FunFam" id="2.30.30.40:FF:000018">
    <property type="entry name" value="Brain-specific angiogenesis inhibitor 1-associated protein 2"/>
    <property type="match status" value="1"/>
</dbReference>
<dbReference type="FunFam" id="1.20.1270.60:FF:000043">
    <property type="entry name" value="Brain-specific angiogenesis inhibitor 1-associated protein 2-like 1"/>
    <property type="match status" value="1"/>
</dbReference>
<dbReference type="Gene3D" id="1.20.1270.60">
    <property type="entry name" value="Arfaptin homology (AH) domain/BAR domain"/>
    <property type="match status" value="1"/>
</dbReference>
<dbReference type="Gene3D" id="2.30.30.40">
    <property type="entry name" value="SH3 Domains"/>
    <property type="match status" value="1"/>
</dbReference>
<dbReference type="IDEAL" id="IID00331"/>
<dbReference type="InterPro" id="IPR027267">
    <property type="entry name" value="AH/BAR_dom_sf"/>
</dbReference>
<dbReference type="InterPro" id="IPR030060">
    <property type="entry name" value="Baiap2l1_I-BAR_dom"/>
</dbReference>
<dbReference type="InterPro" id="IPR013606">
    <property type="entry name" value="I-BAR_dom"/>
</dbReference>
<dbReference type="InterPro" id="IPR027681">
    <property type="entry name" value="IRSp53/IRTKS/Pinkbar"/>
</dbReference>
<dbReference type="InterPro" id="IPR035592">
    <property type="entry name" value="IRTKS_SH3"/>
</dbReference>
<dbReference type="InterPro" id="IPR036028">
    <property type="entry name" value="SH3-like_dom_sf"/>
</dbReference>
<dbReference type="InterPro" id="IPR001452">
    <property type="entry name" value="SH3_domain"/>
</dbReference>
<dbReference type="PANTHER" id="PTHR14206">
    <property type="entry name" value="BRAIN-SPECIFIC ANGIOGENESIS INHIBITOR 1-ASSOCIATED PROTEIN 2"/>
    <property type="match status" value="1"/>
</dbReference>
<dbReference type="PANTHER" id="PTHR14206:SF4">
    <property type="entry name" value="BRAIN-SPECIFIC ANGIOGENESIS INHIBITOR 1-ASSOCIATED PROTEIN 2-LIKE PROTEIN 1"/>
    <property type="match status" value="1"/>
</dbReference>
<dbReference type="Pfam" id="PF08397">
    <property type="entry name" value="IMD"/>
    <property type="match status" value="1"/>
</dbReference>
<dbReference type="Pfam" id="PF14604">
    <property type="entry name" value="SH3_9"/>
    <property type="match status" value="1"/>
</dbReference>
<dbReference type="SMART" id="SM00326">
    <property type="entry name" value="SH3"/>
    <property type="match status" value="1"/>
</dbReference>
<dbReference type="SUPFAM" id="SSF103657">
    <property type="entry name" value="BAR/IMD domain-like"/>
    <property type="match status" value="1"/>
</dbReference>
<dbReference type="SUPFAM" id="SSF50044">
    <property type="entry name" value="SH3-domain"/>
    <property type="match status" value="1"/>
</dbReference>
<dbReference type="PROSITE" id="PS51338">
    <property type="entry name" value="IMD"/>
    <property type="match status" value="1"/>
</dbReference>
<dbReference type="PROSITE" id="PS50002">
    <property type="entry name" value="SH3"/>
    <property type="match status" value="1"/>
</dbReference>